<accession>Q8ZQZ6</accession>
<protein>
    <recommendedName>
        <fullName evidence="1">Leucine--tRNA ligase</fullName>
        <ecNumber evidence="1">6.1.1.4</ecNumber>
    </recommendedName>
    <alternativeName>
        <fullName evidence="1">Leucyl-tRNA synthetase</fullName>
        <shortName evidence="1">LeuRS</shortName>
    </alternativeName>
</protein>
<gene>
    <name evidence="1" type="primary">leuS</name>
    <name type="ordered locus">STM0648</name>
</gene>
<comment type="catalytic activity">
    <reaction evidence="1">
        <text>tRNA(Leu) + L-leucine + ATP = L-leucyl-tRNA(Leu) + AMP + diphosphate</text>
        <dbReference type="Rhea" id="RHEA:11688"/>
        <dbReference type="Rhea" id="RHEA-COMP:9613"/>
        <dbReference type="Rhea" id="RHEA-COMP:9622"/>
        <dbReference type="ChEBI" id="CHEBI:30616"/>
        <dbReference type="ChEBI" id="CHEBI:33019"/>
        <dbReference type="ChEBI" id="CHEBI:57427"/>
        <dbReference type="ChEBI" id="CHEBI:78442"/>
        <dbReference type="ChEBI" id="CHEBI:78494"/>
        <dbReference type="ChEBI" id="CHEBI:456215"/>
        <dbReference type="EC" id="6.1.1.4"/>
    </reaction>
</comment>
<comment type="subcellular location">
    <subcellularLocation>
        <location evidence="1">Cytoplasm</location>
    </subcellularLocation>
</comment>
<comment type="similarity">
    <text evidence="1">Belongs to the class-I aminoacyl-tRNA synthetase family.</text>
</comment>
<keyword id="KW-0030">Aminoacyl-tRNA synthetase</keyword>
<keyword id="KW-0067">ATP-binding</keyword>
<keyword id="KW-0963">Cytoplasm</keyword>
<keyword id="KW-0436">Ligase</keyword>
<keyword id="KW-0547">Nucleotide-binding</keyword>
<keyword id="KW-0648">Protein biosynthesis</keyword>
<keyword id="KW-1185">Reference proteome</keyword>
<proteinExistence type="inferred from homology"/>
<dbReference type="EC" id="6.1.1.4" evidence="1"/>
<dbReference type="EMBL" id="AE006468">
    <property type="protein sequence ID" value="AAL19599.1"/>
    <property type="molecule type" value="Genomic_DNA"/>
</dbReference>
<dbReference type="RefSeq" id="NP_459640.1">
    <property type="nucleotide sequence ID" value="NC_003197.2"/>
</dbReference>
<dbReference type="RefSeq" id="WP_001157918.1">
    <property type="nucleotide sequence ID" value="NC_003197.2"/>
</dbReference>
<dbReference type="SMR" id="Q8ZQZ6"/>
<dbReference type="STRING" id="99287.STM0648"/>
<dbReference type="PaxDb" id="99287-STM0648"/>
<dbReference type="GeneID" id="1252168"/>
<dbReference type="KEGG" id="stm:STM0648"/>
<dbReference type="PATRIC" id="fig|99287.12.peg.684"/>
<dbReference type="HOGENOM" id="CLU_004427_0_0_6"/>
<dbReference type="PhylomeDB" id="Q8ZQZ6"/>
<dbReference type="BioCyc" id="SENT99287:STM0648-MONOMER"/>
<dbReference type="Proteomes" id="UP000001014">
    <property type="component" value="Chromosome"/>
</dbReference>
<dbReference type="GO" id="GO:0005829">
    <property type="term" value="C:cytosol"/>
    <property type="evidence" value="ECO:0000318"/>
    <property type="project" value="GO_Central"/>
</dbReference>
<dbReference type="GO" id="GO:0002161">
    <property type="term" value="F:aminoacyl-tRNA deacylase activity"/>
    <property type="evidence" value="ECO:0007669"/>
    <property type="project" value="InterPro"/>
</dbReference>
<dbReference type="GO" id="GO:0005524">
    <property type="term" value="F:ATP binding"/>
    <property type="evidence" value="ECO:0007669"/>
    <property type="project" value="UniProtKB-UniRule"/>
</dbReference>
<dbReference type="GO" id="GO:0004823">
    <property type="term" value="F:leucine-tRNA ligase activity"/>
    <property type="evidence" value="ECO:0000318"/>
    <property type="project" value="GO_Central"/>
</dbReference>
<dbReference type="GO" id="GO:0006429">
    <property type="term" value="P:leucyl-tRNA aminoacylation"/>
    <property type="evidence" value="ECO:0000318"/>
    <property type="project" value="GO_Central"/>
</dbReference>
<dbReference type="CDD" id="cd07958">
    <property type="entry name" value="Anticodon_Ia_Leu_BEm"/>
    <property type="match status" value="1"/>
</dbReference>
<dbReference type="CDD" id="cd00812">
    <property type="entry name" value="LeuRS_core"/>
    <property type="match status" value="1"/>
</dbReference>
<dbReference type="FunFam" id="1.10.730.10:FF:000002">
    <property type="entry name" value="Leucine--tRNA ligase"/>
    <property type="match status" value="2"/>
</dbReference>
<dbReference type="FunFam" id="2.20.28.290:FF:000001">
    <property type="entry name" value="Leucine--tRNA ligase"/>
    <property type="match status" value="1"/>
</dbReference>
<dbReference type="FunFam" id="3.10.20.590:FF:000001">
    <property type="entry name" value="Leucine--tRNA ligase"/>
    <property type="match status" value="1"/>
</dbReference>
<dbReference type="FunFam" id="3.40.50.620:FF:000003">
    <property type="entry name" value="Leucine--tRNA ligase"/>
    <property type="match status" value="1"/>
</dbReference>
<dbReference type="FunFam" id="3.40.50.620:FF:000124">
    <property type="entry name" value="Leucine--tRNA ligase"/>
    <property type="match status" value="1"/>
</dbReference>
<dbReference type="FunFam" id="3.90.740.10:FF:000012">
    <property type="entry name" value="Leucine--tRNA ligase"/>
    <property type="match status" value="1"/>
</dbReference>
<dbReference type="Gene3D" id="2.20.28.290">
    <property type="match status" value="1"/>
</dbReference>
<dbReference type="Gene3D" id="3.10.20.590">
    <property type="match status" value="1"/>
</dbReference>
<dbReference type="Gene3D" id="3.40.50.620">
    <property type="entry name" value="HUPs"/>
    <property type="match status" value="2"/>
</dbReference>
<dbReference type="Gene3D" id="1.10.730.10">
    <property type="entry name" value="Isoleucyl-tRNA Synthetase, Domain 1"/>
    <property type="match status" value="2"/>
</dbReference>
<dbReference type="HAMAP" id="MF_00049_B">
    <property type="entry name" value="Leu_tRNA_synth_B"/>
    <property type="match status" value="1"/>
</dbReference>
<dbReference type="InterPro" id="IPR001412">
    <property type="entry name" value="aa-tRNA-synth_I_CS"/>
</dbReference>
<dbReference type="InterPro" id="IPR002300">
    <property type="entry name" value="aa-tRNA-synth_Ia"/>
</dbReference>
<dbReference type="InterPro" id="IPR002302">
    <property type="entry name" value="Leu-tRNA-ligase"/>
</dbReference>
<dbReference type="InterPro" id="IPR025709">
    <property type="entry name" value="Leu_tRNA-synth_edit"/>
</dbReference>
<dbReference type="InterPro" id="IPR013155">
    <property type="entry name" value="M/V/L/I-tRNA-synth_anticd-bd"/>
</dbReference>
<dbReference type="InterPro" id="IPR015413">
    <property type="entry name" value="Methionyl/Leucyl_tRNA_Synth"/>
</dbReference>
<dbReference type="InterPro" id="IPR014729">
    <property type="entry name" value="Rossmann-like_a/b/a_fold"/>
</dbReference>
<dbReference type="InterPro" id="IPR009080">
    <property type="entry name" value="tRNAsynth_Ia_anticodon-bd"/>
</dbReference>
<dbReference type="InterPro" id="IPR009008">
    <property type="entry name" value="Val/Leu/Ile-tRNA-synth_edit"/>
</dbReference>
<dbReference type="NCBIfam" id="TIGR00396">
    <property type="entry name" value="leuS_bact"/>
    <property type="match status" value="1"/>
</dbReference>
<dbReference type="PANTHER" id="PTHR43740:SF2">
    <property type="entry name" value="LEUCINE--TRNA LIGASE, MITOCHONDRIAL"/>
    <property type="match status" value="1"/>
</dbReference>
<dbReference type="PANTHER" id="PTHR43740">
    <property type="entry name" value="LEUCYL-TRNA SYNTHETASE"/>
    <property type="match status" value="1"/>
</dbReference>
<dbReference type="Pfam" id="PF08264">
    <property type="entry name" value="Anticodon_1"/>
    <property type="match status" value="1"/>
</dbReference>
<dbReference type="Pfam" id="PF00133">
    <property type="entry name" value="tRNA-synt_1"/>
    <property type="match status" value="2"/>
</dbReference>
<dbReference type="Pfam" id="PF13603">
    <property type="entry name" value="tRNA-synt_1_2"/>
    <property type="match status" value="1"/>
</dbReference>
<dbReference type="Pfam" id="PF09334">
    <property type="entry name" value="tRNA-synt_1g"/>
    <property type="match status" value="1"/>
</dbReference>
<dbReference type="PRINTS" id="PR00985">
    <property type="entry name" value="TRNASYNTHLEU"/>
</dbReference>
<dbReference type="SUPFAM" id="SSF47323">
    <property type="entry name" value="Anticodon-binding domain of a subclass of class I aminoacyl-tRNA synthetases"/>
    <property type="match status" value="1"/>
</dbReference>
<dbReference type="SUPFAM" id="SSF52374">
    <property type="entry name" value="Nucleotidylyl transferase"/>
    <property type="match status" value="1"/>
</dbReference>
<dbReference type="SUPFAM" id="SSF50677">
    <property type="entry name" value="ValRS/IleRS/LeuRS editing domain"/>
    <property type="match status" value="1"/>
</dbReference>
<dbReference type="PROSITE" id="PS00178">
    <property type="entry name" value="AA_TRNA_LIGASE_I"/>
    <property type="match status" value="1"/>
</dbReference>
<feature type="chain" id="PRO_0000152078" description="Leucine--tRNA ligase">
    <location>
        <begin position="1"/>
        <end position="860"/>
    </location>
</feature>
<feature type="short sequence motif" description="'HIGH' region">
    <location>
        <begin position="42"/>
        <end position="52"/>
    </location>
</feature>
<feature type="short sequence motif" description="'KMSKS' region">
    <location>
        <begin position="619"/>
        <end position="623"/>
    </location>
</feature>
<feature type="binding site" evidence="1">
    <location>
        <position position="622"/>
    </location>
    <ligand>
        <name>ATP</name>
        <dbReference type="ChEBI" id="CHEBI:30616"/>
    </ligand>
</feature>
<evidence type="ECO:0000255" key="1">
    <source>
        <dbReference type="HAMAP-Rule" id="MF_00049"/>
    </source>
</evidence>
<organism>
    <name type="scientific">Salmonella typhimurium (strain LT2 / SGSC1412 / ATCC 700720)</name>
    <dbReference type="NCBI Taxonomy" id="99287"/>
    <lineage>
        <taxon>Bacteria</taxon>
        <taxon>Pseudomonadati</taxon>
        <taxon>Pseudomonadota</taxon>
        <taxon>Gammaproteobacteria</taxon>
        <taxon>Enterobacterales</taxon>
        <taxon>Enterobacteriaceae</taxon>
        <taxon>Salmonella</taxon>
    </lineage>
</organism>
<sequence>MQEQYRPEEIESKVQLHWDEKRTFEVTEDESKEKYYCLSMLPYPSGRLHMGHVRNYTIGDVVARYQRMLGKNVLQPIGWDAFGLPAEGAAVKNNTAPAPWTYDNIAYMKNQLKTLGFGYDWSREIATCTPEYYRWEQKFFTELYKKGLVYKKTSAVNWCPNDQTVLANEQVIDGCCWRCDTKVERKEIPQWFIKITAYADELLRDLDKLDHWPDTVKTMQRNWIGRSEGVEITFDVKGYDNTLTVYTTRPDTFMGATYLAVAAGHPLAQKAAANNAELAAFIDECRNTKVAEAEMATMEKKGVDTGYKAIHPLTGEEIPVWAANFVLMEYGTGAVMAVPGHDQRDYEFASKYGLTIKPVILAADGSEPDLSEQALTEKGVLFNSGEFDGLAFEAAFNAIADKLAEKGVGERKVNYRLRDWGVSRQRYWGAPIPMVTLEDGTVLPTPEDQLPVILPEDVVMDGITSPIKADPEWAKTTVNGMPALRETDTFDTFMESSWYYARYTCPQYQEGMLDSKAANYWLPVDIYIGGIEHAIMHLLYFRFFHKLMRDAGMVTSDEPAKQLLCQGMVLADAFYYVGENGERNWVSPVDAIVERDEKGRIVKAKDAAGHELVYTGMSKMSKSKNNGIDPQVMVERYGADTVRLFMMFASPADMTLEWQESGVEGANRFIKRVWKLVYEHTAKGPVAALNVDALSEDQKALRRDVHKTIAKVTDDIGRRQTFNTAIAAIMELMNKLAKAPQEGEQDRALLQEALQAVVRMLNPFTPHVCFTLWQELGGEGDIDNAPWPVADEQAMVENTTLVVVQVNGKVRGKITVPVDATEEQVRERAGQEHLVAKYLDGVTVRKVIYVPGKLLNLVVG</sequence>
<reference key="1">
    <citation type="journal article" date="2001" name="Nature">
        <title>Complete genome sequence of Salmonella enterica serovar Typhimurium LT2.</title>
        <authorList>
            <person name="McClelland M."/>
            <person name="Sanderson K.E."/>
            <person name="Spieth J."/>
            <person name="Clifton S.W."/>
            <person name="Latreille P."/>
            <person name="Courtney L."/>
            <person name="Porwollik S."/>
            <person name="Ali J."/>
            <person name="Dante M."/>
            <person name="Du F."/>
            <person name="Hou S."/>
            <person name="Layman D."/>
            <person name="Leonard S."/>
            <person name="Nguyen C."/>
            <person name="Scott K."/>
            <person name="Holmes A."/>
            <person name="Grewal N."/>
            <person name="Mulvaney E."/>
            <person name="Ryan E."/>
            <person name="Sun H."/>
            <person name="Florea L."/>
            <person name="Miller W."/>
            <person name="Stoneking T."/>
            <person name="Nhan M."/>
            <person name="Waterston R."/>
            <person name="Wilson R.K."/>
        </authorList>
    </citation>
    <scope>NUCLEOTIDE SEQUENCE [LARGE SCALE GENOMIC DNA]</scope>
    <source>
        <strain>LT2 / SGSC1412 / ATCC 700720</strain>
    </source>
</reference>
<name>SYL_SALTY</name>